<accession>Q0BKC2</accession>
<sequence length="172" mass="18732">MALRIEDKKAIVAEVAEQVSSALSAAVADYRGLTVNQMTSLRKQARESGVYLRVVRNNLARLAIKGTEFECLADALKGPLVLALSKDEPGAAAKLFKNFQKDHNAFEVKNLAMSGELFGPEKLDDFAKLPTREEALATLLNIMQAPVTKFVRTLNEIPSQAVRVFAAVGDSK</sequence>
<name>RL10_FRATO</name>
<keyword id="KW-0687">Ribonucleoprotein</keyword>
<keyword id="KW-0689">Ribosomal protein</keyword>
<keyword id="KW-0694">RNA-binding</keyword>
<keyword id="KW-0699">rRNA-binding</keyword>
<evidence type="ECO:0000255" key="1">
    <source>
        <dbReference type="HAMAP-Rule" id="MF_00362"/>
    </source>
</evidence>
<evidence type="ECO:0000305" key="2"/>
<dbReference type="EMBL" id="CP000437">
    <property type="protein sequence ID" value="ABI83462.1"/>
    <property type="molecule type" value="Genomic_DNA"/>
</dbReference>
<dbReference type="RefSeq" id="WP_003017231.1">
    <property type="nucleotide sequence ID" value="NC_017463.1"/>
</dbReference>
<dbReference type="SMR" id="Q0BKC2"/>
<dbReference type="KEGG" id="fth:FTH_1686"/>
<dbReference type="GO" id="GO:1990904">
    <property type="term" value="C:ribonucleoprotein complex"/>
    <property type="evidence" value="ECO:0007669"/>
    <property type="project" value="UniProtKB-KW"/>
</dbReference>
<dbReference type="GO" id="GO:0005840">
    <property type="term" value="C:ribosome"/>
    <property type="evidence" value="ECO:0007669"/>
    <property type="project" value="UniProtKB-KW"/>
</dbReference>
<dbReference type="GO" id="GO:0070180">
    <property type="term" value="F:large ribosomal subunit rRNA binding"/>
    <property type="evidence" value="ECO:0007669"/>
    <property type="project" value="UniProtKB-UniRule"/>
</dbReference>
<dbReference type="GO" id="GO:0006412">
    <property type="term" value="P:translation"/>
    <property type="evidence" value="ECO:0007669"/>
    <property type="project" value="UniProtKB-UniRule"/>
</dbReference>
<dbReference type="CDD" id="cd05797">
    <property type="entry name" value="Ribosomal_L10"/>
    <property type="match status" value="1"/>
</dbReference>
<dbReference type="Gene3D" id="3.30.70.1730">
    <property type="match status" value="1"/>
</dbReference>
<dbReference type="Gene3D" id="6.10.250.290">
    <property type="match status" value="1"/>
</dbReference>
<dbReference type="HAMAP" id="MF_00362">
    <property type="entry name" value="Ribosomal_uL10"/>
    <property type="match status" value="1"/>
</dbReference>
<dbReference type="InterPro" id="IPR001790">
    <property type="entry name" value="Ribosomal_uL10"/>
</dbReference>
<dbReference type="InterPro" id="IPR043141">
    <property type="entry name" value="Ribosomal_uL10-like_sf"/>
</dbReference>
<dbReference type="InterPro" id="IPR022973">
    <property type="entry name" value="Ribosomal_uL10_bac"/>
</dbReference>
<dbReference type="InterPro" id="IPR047865">
    <property type="entry name" value="Ribosomal_uL10_bac_type"/>
</dbReference>
<dbReference type="NCBIfam" id="NF000955">
    <property type="entry name" value="PRK00099.1-1"/>
    <property type="match status" value="1"/>
</dbReference>
<dbReference type="PANTHER" id="PTHR11560">
    <property type="entry name" value="39S RIBOSOMAL PROTEIN L10, MITOCHONDRIAL"/>
    <property type="match status" value="1"/>
</dbReference>
<dbReference type="Pfam" id="PF00466">
    <property type="entry name" value="Ribosomal_L10"/>
    <property type="match status" value="1"/>
</dbReference>
<dbReference type="SUPFAM" id="SSF160369">
    <property type="entry name" value="Ribosomal protein L10-like"/>
    <property type="match status" value="1"/>
</dbReference>
<feature type="chain" id="PRO_1000005503" description="Large ribosomal subunit protein uL10">
    <location>
        <begin position="1"/>
        <end position="172"/>
    </location>
</feature>
<reference key="1">
    <citation type="journal article" date="2006" name="J. Bacteriol.">
        <title>Chromosome rearrangement and diversification of Francisella tularensis revealed by the type B (OSU18) genome sequence.</title>
        <authorList>
            <person name="Petrosino J.F."/>
            <person name="Xiang Q."/>
            <person name="Karpathy S.E."/>
            <person name="Jiang H."/>
            <person name="Yerrapragada S."/>
            <person name="Liu Y."/>
            <person name="Gioia J."/>
            <person name="Hemphill L."/>
            <person name="Gonzalez A."/>
            <person name="Raghavan T.M."/>
            <person name="Uzman A."/>
            <person name="Fox G.E."/>
            <person name="Highlander S."/>
            <person name="Reichard M."/>
            <person name="Morton R.J."/>
            <person name="Clinkenbeard K.D."/>
            <person name="Weinstock G.M."/>
        </authorList>
    </citation>
    <scope>NUCLEOTIDE SEQUENCE [LARGE SCALE GENOMIC DNA]</scope>
    <source>
        <strain>OSU18</strain>
    </source>
</reference>
<proteinExistence type="inferred from homology"/>
<protein>
    <recommendedName>
        <fullName evidence="1">Large ribosomal subunit protein uL10</fullName>
    </recommendedName>
    <alternativeName>
        <fullName evidence="2">50S ribosomal protein L10</fullName>
    </alternativeName>
</protein>
<gene>
    <name evidence="1" type="primary">rplJ</name>
    <name type="ordered locus">FTH_1686</name>
</gene>
<comment type="function">
    <text evidence="1">Forms part of the ribosomal stalk, playing a central role in the interaction of the ribosome with GTP-bound translation factors.</text>
</comment>
<comment type="subunit">
    <text evidence="1">Part of the ribosomal stalk of the 50S ribosomal subunit. The N-terminus interacts with L11 and the large rRNA to form the base of the stalk. The C-terminus forms an elongated spine to which L12 dimers bind in a sequential fashion forming a multimeric L10(L12)X complex.</text>
</comment>
<comment type="similarity">
    <text evidence="1">Belongs to the universal ribosomal protein uL10 family.</text>
</comment>
<organism>
    <name type="scientific">Francisella tularensis subsp. holarctica (strain OSU18)</name>
    <dbReference type="NCBI Taxonomy" id="393011"/>
    <lineage>
        <taxon>Bacteria</taxon>
        <taxon>Pseudomonadati</taxon>
        <taxon>Pseudomonadota</taxon>
        <taxon>Gammaproteobacteria</taxon>
        <taxon>Thiotrichales</taxon>
        <taxon>Francisellaceae</taxon>
        <taxon>Francisella</taxon>
    </lineage>
</organism>